<keyword id="KW-0548">Nucleotidyltransferase</keyword>
<keyword id="KW-0808">Transferase</keyword>
<organism>
    <name type="scientific">Escherichia coli O6:K15:H31 (strain 536 / UPEC)</name>
    <dbReference type="NCBI Taxonomy" id="362663"/>
    <lineage>
        <taxon>Bacteria</taxon>
        <taxon>Pseudomonadati</taxon>
        <taxon>Pseudomonadota</taxon>
        <taxon>Gammaproteobacteria</taxon>
        <taxon>Enterobacterales</taxon>
        <taxon>Enterobacteriaceae</taxon>
        <taxon>Escherichia</taxon>
    </lineage>
</organism>
<gene>
    <name evidence="1" type="primary">citX</name>
    <name type="ordered locus">ECP_0645</name>
</gene>
<comment type="function">
    <text evidence="1">Transfers 2-(5''-triphosphoribosyl)-3'-dephosphocoenzyme-A on a serine residue to the apo-acyl carrier protein (gamma chain) of the citrate lyase to yield holo-acyl carrier protein.</text>
</comment>
<comment type="catalytic activity">
    <reaction evidence="1">
        <text>apo-[citrate lyase ACP] + 2'-(5''-triphospho-alpha-D-ribosyl)-3'-dephospho-CoA = holo-[citrate lyase ACP] + diphosphate</text>
        <dbReference type="Rhea" id="RHEA:16333"/>
        <dbReference type="Rhea" id="RHEA-COMP:10157"/>
        <dbReference type="Rhea" id="RHEA-COMP:10158"/>
        <dbReference type="ChEBI" id="CHEBI:29999"/>
        <dbReference type="ChEBI" id="CHEBI:33019"/>
        <dbReference type="ChEBI" id="CHEBI:61378"/>
        <dbReference type="ChEBI" id="CHEBI:82683"/>
        <dbReference type="EC" id="2.7.7.61"/>
    </reaction>
</comment>
<comment type="similarity">
    <text evidence="1">Belongs to the CitX family.</text>
</comment>
<reference key="1">
    <citation type="journal article" date="2006" name="Mol. Microbiol.">
        <title>Role of pathogenicity island-associated integrases in the genome plasticity of uropathogenic Escherichia coli strain 536.</title>
        <authorList>
            <person name="Hochhut B."/>
            <person name="Wilde C."/>
            <person name="Balling G."/>
            <person name="Middendorf B."/>
            <person name="Dobrindt U."/>
            <person name="Brzuszkiewicz E."/>
            <person name="Gottschalk G."/>
            <person name="Carniel E."/>
            <person name="Hacker J."/>
        </authorList>
    </citation>
    <scope>NUCLEOTIDE SEQUENCE [LARGE SCALE GENOMIC DNA]</scope>
    <source>
        <strain>536 / UPEC</strain>
    </source>
</reference>
<evidence type="ECO:0000255" key="1">
    <source>
        <dbReference type="HAMAP-Rule" id="MF_00398"/>
    </source>
</evidence>
<sequence length="183" mass="20228">MHLLPELASHHAVSIPELLVSRDERQARQHAWLKRHPVPLVSFTVVAPGPIKDSEVTRRIFNHGVTALRALAAKQGWQIQEQAALVSASGPEGMLSIAAPARDLKLATIELEHSHPLGRLWDIDVLTPEGDILSRRDYSLPPRRCLLCEQSAAVCARGKTHQLTDLLNRMEALLNDVDACNVN</sequence>
<protein>
    <recommendedName>
        <fullName>Apo-citrate lyase phosphoribosyl-dephospho-CoA transferase</fullName>
        <ecNumber evidence="1">2.7.7.61</ecNumber>
    </recommendedName>
    <alternativeName>
        <fullName evidence="1">Apo-ACP nucleodityltransferase</fullName>
    </alternativeName>
    <alternativeName>
        <fullName evidence="1">Holo-ACP synthase</fullName>
    </alternativeName>
    <alternativeName>
        <fullName evidence="1">Holo-citrate lyase synthase</fullName>
    </alternativeName>
</protein>
<feature type="chain" id="PRO_1000049602" description="Apo-citrate lyase phosphoribosyl-dephospho-CoA transferase">
    <location>
        <begin position="1"/>
        <end position="183"/>
    </location>
</feature>
<proteinExistence type="inferred from homology"/>
<dbReference type="EC" id="2.7.7.61" evidence="1"/>
<dbReference type="EMBL" id="CP000247">
    <property type="protein sequence ID" value="ABG68673.1"/>
    <property type="molecule type" value="Genomic_DNA"/>
</dbReference>
<dbReference type="RefSeq" id="WP_000550407.1">
    <property type="nucleotide sequence ID" value="NC_008253.1"/>
</dbReference>
<dbReference type="SMR" id="Q0TK58"/>
<dbReference type="KEGG" id="ecp:ECP_0645"/>
<dbReference type="HOGENOM" id="CLU_104529_1_1_6"/>
<dbReference type="Proteomes" id="UP000009182">
    <property type="component" value="Chromosome"/>
</dbReference>
<dbReference type="GO" id="GO:0050519">
    <property type="term" value="F:holo-citrate lyase synthase activity"/>
    <property type="evidence" value="ECO:0007669"/>
    <property type="project" value="UniProtKB-UniRule"/>
</dbReference>
<dbReference type="GO" id="GO:0051191">
    <property type="term" value="P:prosthetic group biosynthetic process"/>
    <property type="evidence" value="ECO:0007669"/>
    <property type="project" value="InterPro"/>
</dbReference>
<dbReference type="HAMAP" id="MF_00398">
    <property type="entry name" value="CitX"/>
    <property type="match status" value="1"/>
</dbReference>
<dbReference type="InterPro" id="IPR005551">
    <property type="entry name" value="CitX"/>
</dbReference>
<dbReference type="NCBIfam" id="TIGR03124">
    <property type="entry name" value="citrate_citX"/>
    <property type="match status" value="1"/>
</dbReference>
<dbReference type="NCBIfam" id="NF002383">
    <property type="entry name" value="PRK01392.1"/>
    <property type="match status" value="1"/>
</dbReference>
<dbReference type="Pfam" id="PF03802">
    <property type="entry name" value="CitX"/>
    <property type="match status" value="1"/>
</dbReference>
<name>CITX_ECOL5</name>
<accession>Q0TK58</accession>